<proteinExistence type="evidence at protein level"/>
<organism>
    <name type="scientific">Arabidopsis thaliana</name>
    <name type="common">Mouse-ear cress</name>
    <dbReference type="NCBI Taxonomy" id="3702"/>
    <lineage>
        <taxon>Eukaryota</taxon>
        <taxon>Viridiplantae</taxon>
        <taxon>Streptophyta</taxon>
        <taxon>Embryophyta</taxon>
        <taxon>Tracheophyta</taxon>
        <taxon>Spermatophyta</taxon>
        <taxon>Magnoliopsida</taxon>
        <taxon>eudicotyledons</taxon>
        <taxon>Gunneridae</taxon>
        <taxon>Pentapetalae</taxon>
        <taxon>rosids</taxon>
        <taxon>malvids</taxon>
        <taxon>Brassicales</taxon>
        <taxon>Brassicaceae</taxon>
        <taxon>Camelineae</taxon>
        <taxon>Arabidopsis</taxon>
    </lineage>
</organism>
<gene>
    <name evidence="8 9" type="primary">UPM1</name>
    <name evidence="11" type="ordered locus">At5g40850</name>
    <name evidence="12" type="ORF">MHK7.8</name>
</gene>
<keyword id="KW-0150">Chloroplast</keyword>
<keyword id="KW-0489">Methyltransferase</keyword>
<keyword id="KW-0934">Plastid</keyword>
<keyword id="KW-0627">Porphyrin biosynthesis</keyword>
<keyword id="KW-1185">Reference proteome</keyword>
<keyword id="KW-0949">S-adenosyl-L-methionine</keyword>
<keyword id="KW-0808">Transferase</keyword>
<keyword id="KW-0809">Transit peptide</keyword>
<feature type="transit peptide" description="Chloroplast" evidence="2">
    <location>
        <begin position="1"/>
        <end position="28"/>
    </location>
</feature>
<feature type="chain" id="PRO_0000450860" description="S-adenosyl-L-methionine-dependent uroporphyrinogen III methyltransferase, chloroplastic">
    <location>
        <begin position="29"/>
        <end position="369"/>
    </location>
</feature>
<feature type="binding site" evidence="1">
    <location>
        <position position="124"/>
    </location>
    <ligand>
        <name>S-adenosyl-L-homocysteine</name>
        <dbReference type="ChEBI" id="CHEBI:57856"/>
    </ligand>
</feature>
<feature type="binding site" evidence="1">
    <location>
        <begin position="200"/>
        <end position="202"/>
    </location>
    <ligand>
        <name>S-adenosyl-L-homocysteine</name>
        <dbReference type="ChEBI" id="CHEBI:57856"/>
    </ligand>
</feature>
<feature type="binding site" evidence="1">
    <location>
        <begin position="230"/>
        <end position="231"/>
    </location>
    <ligand>
        <name>S-adenosyl-L-homocysteine</name>
        <dbReference type="ChEBI" id="CHEBI:57856"/>
    </ligand>
</feature>
<feature type="binding site" evidence="1">
    <location>
        <position position="284"/>
    </location>
    <ligand>
        <name>S-adenosyl-L-homocysteine</name>
        <dbReference type="ChEBI" id="CHEBI:57856"/>
    </ligand>
</feature>
<feature type="binding site" evidence="1">
    <location>
        <position position="341"/>
    </location>
    <ligand>
        <name>S-adenosyl-L-homocysteine</name>
        <dbReference type="ChEBI" id="CHEBI:57856"/>
    </ligand>
</feature>
<feature type="sequence conflict" description="In Ref. 1; AAB92677." evidence="10" ref="1">
    <original>R</original>
    <variation>K</variation>
    <location>
        <position position="163"/>
    </location>
</feature>
<feature type="sequence conflict" description="In Ref. 1; AAB92677." evidence="10" ref="1">
    <original>SR</original>
    <variation>TK</variation>
    <location>
        <begin position="175"/>
        <end position="176"/>
    </location>
</feature>
<name>UPM1_ARATH</name>
<comment type="function">
    <text evidence="4 6 7">Essential protein required for siroheme biosynthesis (PubMed:20592802). Catalyzes the two successive C-2 and C-7 methylation reactions involved in the conversion of uroporphyrinogen III to precorrin-2 via the intermediate formation of precorrin-1 (PubMed:9006913). It is a step in the biosynthesis of siroheme (PubMed:9006913). Promotes nitrogen and sulfur assimilation as well as photosynthesis efficiency by triggering chlorophyll, nitrite reductase (NiR) and sulfite reductase (SiR) biosynthesis (PubMed:29472934).</text>
</comment>
<comment type="catalytic activity">
    <reaction evidence="7">
        <text>uroporphyrinogen III + 2 S-adenosyl-L-methionine = precorrin-2 + 2 S-adenosyl-L-homocysteine + H(+)</text>
        <dbReference type="Rhea" id="RHEA:32459"/>
        <dbReference type="ChEBI" id="CHEBI:15378"/>
        <dbReference type="ChEBI" id="CHEBI:57308"/>
        <dbReference type="ChEBI" id="CHEBI:57856"/>
        <dbReference type="ChEBI" id="CHEBI:58827"/>
        <dbReference type="ChEBI" id="CHEBI:59789"/>
        <dbReference type="EC" id="2.1.1.107"/>
    </reaction>
    <physiologicalReaction direction="left-to-right" evidence="7">
        <dbReference type="Rhea" id="RHEA:32460"/>
    </physiologicalReaction>
</comment>
<comment type="pathway">
    <text evidence="7">Porphyrin-containing compound metabolism; siroheme biosynthesis; precorrin-2 from uroporphyrinogen III: step 1/1.</text>
</comment>
<comment type="subcellular location">
    <subcellularLocation>
        <location evidence="7">Plastid</location>
        <location evidence="7">Chloroplast</location>
    </subcellularLocation>
</comment>
<comment type="tissue specificity">
    <text evidence="5">Mostly expressed in leaves, and, to a lower extent, in stems, flowers and siliques.</text>
</comment>
<comment type="induction">
    <text evidence="3 5">By light (PubMed:15326282, PubMed:27729721). Accumulates within two hours in etiolated seedlings exposed to light (PubMed:27729721).</text>
</comment>
<comment type="disruption phenotype">
    <text evidence="4">Embryo lethal.</text>
</comment>
<comment type="similarity">
    <text evidence="10">Belongs to the precorrin methyltransferase family.</text>
</comment>
<sequence length="369" mass="39930">MALVQRIPISSSSIRNWQQARTNLTPICCLHYNTASSSSSPFTEKHSVERYQRDQWLYKAVEPTPPSTPSPSPFEDEVFVRENDIASQLPELKKLLAVLKEKRVKGCKGGDCGPGDVYLVGTGPGDPELLTLKAVRVIQSADLLLYDRLVSNDVLELVAPDARLLYVGKTAGYHSRTQEEIHELLLNFAEAGATVVRLKGGDPLVFGRGGEEMDFLQQQGIRVQVIPGITAASGIAAELGIPLTHRGVATSVRFLTGHSRKGGTDPLFVAENAADPDTTLVVYMGLGTLPSLAQKLMDHGLPSDTPAVAVERGTTPLQRTVFAELKDFATEIQSAGLVSPTLIIIGKVVELSPLWPHCTKESSCLVETR</sequence>
<accession>Q42606</accession>
<accession>Q96532</accession>
<reference key="1">
    <citation type="journal article" date="1997" name="J. Biol. Chem.">
        <title>Siroheme biosynthesis in higher plants. Analysis of an S-adenosyl-L-methionine-dependent uroporphyrinogen III methyltransferase from Arabidopsis thaliana.</title>
        <authorList>
            <person name="Leustek T."/>
            <person name="Smith M."/>
            <person name="Murillo M."/>
            <person name="Singh D.P."/>
            <person name="Smith A.G."/>
            <person name="Woodcock S.C."/>
            <person name="Awan S.J."/>
            <person name="Warren M.J."/>
        </authorList>
    </citation>
    <scope>NUCLEOTIDE SEQUENCE [GENOMIC DNA / MRNA]</scope>
    <scope>FUNCTION</scope>
    <scope>CATALYTIC ACTIVITY</scope>
    <scope>SUBCELLULAR LOCATION</scope>
    <scope>PATHWAY</scope>
    <source>
        <strain>cv. Columbia</strain>
    </source>
</reference>
<reference key="2">
    <citation type="journal article" date="1998" name="DNA Res.">
        <title>Structural analysis of Arabidopsis thaliana chromosome 5. V. Sequence features of the regions of 1,381,565 bp covered by twenty one physically assigned P1 and TAC clones.</title>
        <authorList>
            <person name="Kaneko T."/>
            <person name="Kotani H."/>
            <person name="Nakamura Y."/>
            <person name="Sato S."/>
            <person name="Asamizu E."/>
            <person name="Miyajima N."/>
            <person name="Tabata S."/>
        </authorList>
    </citation>
    <scope>NUCLEOTIDE SEQUENCE [LARGE SCALE GENOMIC DNA]</scope>
    <source>
        <strain>cv. Columbia</strain>
    </source>
</reference>
<reference key="3">
    <citation type="journal article" date="2017" name="Plant J.">
        <title>Araport11: a complete reannotation of the Arabidopsis thaliana reference genome.</title>
        <authorList>
            <person name="Cheng C.Y."/>
            <person name="Krishnakumar V."/>
            <person name="Chan A.P."/>
            <person name="Thibaud-Nissen F."/>
            <person name="Schobel S."/>
            <person name="Town C.D."/>
        </authorList>
    </citation>
    <scope>GENOME REANNOTATION</scope>
    <source>
        <strain>cv. Columbia</strain>
    </source>
</reference>
<reference key="4">
    <citation type="journal article" date="2003" name="Science">
        <title>Empirical analysis of transcriptional activity in the Arabidopsis genome.</title>
        <authorList>
            <person name="Yamada K."/>
            <person name="Lim J."/>
            <person name="Dale J.M."/>
            <person name="Chen H."/>
            <person name="Shinn P."/>
            <person name="Palm C.J."/>
            <person name="Southwick A.M."/>
            <person name="Wu H.C."/>
            <person name="Kim C.J."/>
            <person name="Nguyen M."/>
            <person name="Pham P.K."/>
            <person name="Cheuk R.F."/>
            <person name="Karlin-Newmann G."/>
            <person name="Liu S.X."/>
            <person name="Lam B."/>
            <person name="Sakano H."/>
            <person name="Wu T."/>
            <person name="Yu G."/>
            <person name="Miranda M."/>
            <person name="Quach H.L."/>
            <person name="Tripp M."/>
            <person name="Chang C.H."/>
            <person name="Lee J.M."/>
            <person name="Toriumi M.J."/>
            <person name="Chan M.M."/>
            <person name="Tang C.C."/>
            <person name="Onodera C.S."/>
            <person name="Deng J.M."/>
            <person name="Akiyama K."/>
            <person name="Ansari Y."/>
            <person name="Arakawa T."/>
            <person name="Banh J."/>
            <person name="Banno F."/>
            <person name="Bowser L."/>
            <person name="Brooks S.Y."/>
            <person name="Carninci P."/>
            <person name="Chao Q."/>
            <person name="Choy N."/>
            <person name="Enju A."/>
            <person name="Goldsmith A.D."/>
            <person name="Gurjal M."/>
            <person name="Hansen N.F."/>
            <person name="Hayashizaki Y."/>
            <person name="Johnson-Hopson C."/>
            <person name="Hsuan V.W."/>
            <person name="Iida K."/>
            <person name="Karnes M."/>
            <person name="Khan S."/>
            <person name="Koesema E."/>
            <person name="Ishida J."/>
            <person name="Jiang P.X."/>
            <person name="Jones T."/>
            <person name="Kawai J."/>
            <person name="Kamiya A."/>
            <person name="Meyers C."/>
            <person name="Nakajima M."/>
            <person name="Narusaka M."/>
            <person name="Seki M."/>
            <person name="Sakurai T."/>
            <person name="Satou M."/>
            <person name="Tamse R."/>
            <person name="Vaysberg M."/>
            <person name="Wallender E.K."/>
            <person name="Wong C."/>
            <person name="Yamamura Y."/>
            <person name="Yuan S."/>
            <person name="Shinozaki K."/>
            <person name="Davis R.W."/>
            <person name="Theologis A."/>
            <person name="Ecker J.R."/>
        </authorList>
    </citation>
    <scope>NUCLEOTIDE SEQUENCE [LARGE SCALE MRNA]</scope>
    <source>
        <strain>cv. Columbia</strain>
    </source>
</reference>
<reference key="5">
    <citation type="journal article" date="2004" name="Plant Physiol.">
        <title>Gene expression profiling of the tetrapyrrole metabolic pathway in Arabidopsis with a mini-array system.</title>
        <authorList>
            <person name="Matsumoto F."/>
            <person name="Obayashi T."/>
            <person name="Sasaki-Sekimoto Y."/>
            <person name="Ohta H."/>
            <person name="Takamiya K."/>
            <person name="Masuda T."/>
        </authorList>
    </citation>
    <scope>INDUCTION BY LIGHT</scope>
    <source>
        <strain>cv. Columbia</strain>
    </source>
</reference>
<reference key="6">
    <citation type="journal article" date="2010" name="Plant Signal. Behav.">
        <title>Siroheme: an essential component for life on earth.</title>
        <authorList>
            <person name="Tripathy B.C."/>
            <person name="Sherameti I."/>
            <person name="Oelmueller R."/>
        </authorList>
    </citation>
    <scope>FUNCTION</scope>
    <scope>DISRUPTION PHENOTYPE</scope>
    <scope>REVIEW ON SIROHEME</scope>
</reference>
<reference key="7">
    <citation type="journal article" date="2016" name="Physiol. Mol. Biol. Plants">
        <title>Phylogenetic analysis and photoregulation of siroheme biosynthesis genes: uroporphyrinogen III methyltransferase and sirohydrochlorin ferrochelatase of Arabidopsis thaliana.</title>
        <authorList>
            <person name="Garai S."/>
            <person name="Joshi N.C."/>
            <person name="Tripathy B.C."/>
        </authorList>
    </citation>
    <scope>TISSUE SPECIFICITY</scope>
    <scope>INDUCTION BY LIGHT</scope>
    <source>
        <strain>cv. Columbia</strain>
    </source>
</reference>
<reference key="8">
    <citation type="journal article" date="2017" name="Front. Plant Sci.">
        <title>Alleviation of nitrogen and sulfur deficiency and enhancement of photosynthesis in Arabidopsis thaliana by overexpression of uroporphyrinogen III methyltransferase (UPM1).</title>
        <authorList>
            <person name="Garai S."/>
            <person name="Tripathy B.C."/>
        </authorList>
    </citation>
    <scope>FUNCTION</scope>
    <source>
        <strain>cv. Columbia</strain>
    </source>
</reference>
<evidence type="ECO:0000250" key="1">
    <source>
        <dbReference type="UniProtKB" id="P21631"/>
    </source>
</evidence>
<evidence type="ECO:0000255" key="2"/>
<evidence type="ECO:0000269" key="3">
    <source>
    </source>
</evidence>
<evidence type="ECO:0000269" key="4">
    <source>
    </source>
</evidence>
<evidence type="ECO:0000269" key="5">
    <source>
    </source>
</evidence>
<evidence type="ECO:0000269" key="6">
    <source>
    </source>
</evidence>
<evidence type="ECO:0000269" key="7">
    <source>
    </source>
</evidence>
<evidence type="ECO:0000303" key="8">
    <source>
    </source>
</evidence>
<evidence type="ECO:0000303" key="9">
    <source>
    </source>
</evidence>
<evidence type="ECO:0000305" key="10"/>
<evidence type="ECO:0000312" key="11">
    <source>
        <dbReference type="Araport" id="AT5G40850"/>
    </source>
</evidence>
<evidence type="ECO:0000312" key="12">
    <source>
        <dbReference type="EMBL" id="BAB11347.1"/>
    </source>
</evidence>
<dbReference type="EC" id="2.1.1.107" evidence="7"/>
<dbReference type="EMBL" id="L47479">
    <property type="protein sequence ID" value="AAB92676.1"/>
    <property type="molecule type" value="mRNA"/>
</dbReference>
<dbReference type="EMBL" id="U63734">
    <property type="protein sequence ID" value="AAB92677.1"/>
    <property type="molecule type" value="Genomic_DNA"/>
</dbReference>
<dbReference type="EMBL" id="AB011477">
    <property type="protein sequence ID" value="BAB11347.1"/>
    <property type="molecule type" value="Genomic_DNA"/>
</dbReference>
<dbReference type="EMBL" id="CP002688">
    <property type="protein sequence ID" value="AED94606.1"/>
    <property type="molecule type" value="Genomic_DNA"/>
</dbReference>
<dbReference type="EMBL" id="AF462833">
    <property type="protein sequence ID" value="AAL58921.1"/>
    <property type="molecule type" value="mRNA"/>
</dbReference>
<dbReference type="EMBL" id="AY058093">
    <property type="protein sequence ID" value="AAL24201.1"/>
    <property type="molecule type" value="mRNA"/>
</dbReference>
<dbReference type="EMBL" id="AY079029">
    <property type="protein sequence ID" value="AAL84983.1"/>
    <property type="molecule type" value="mRNA"/>
</dbReference>
<dbReference type="EMBL" id="AY142030">
    <property type="protein sequence ID" value="AAM98294.1"/>
    <property type="molecule type" value="mRNA"/>
</dbReference>
<dbReference type="RefSeq" id="NP_198901.1">
    <property type="nucleotide sequence ID" value="NM_123450.5"/>
</dbReference>
<dbReference type="SMR" id="Q42606"/>
<dbReference type="FunCoup" id="Q42606">
    <property type="interactions" value="289"/>
</dbReference>
<dbReference type="STRING" id="3702.Q42606"/>
<dbReference type="GlyGen" id="Q42606">
    <property type="glycosylation" value="2 sites"/>
</dbReference>
<dbReference type="PaxDb" id="3702-AT5G40850.1"/>
<dbReference type="ProteomicsDB" id="178814"/>
<dbReference type="EnsemblPlants" id="AT5G40850.1">
    <property type="protein sequence ID" value="AT5G40850.1"/>
    <property type="gene ID" value="AT5G40850"/>
</dbReference>
<dbReference type="GeneID" id="834085"/>
<dbReference type="Gramene" id="AT5G40850.1">
    <property type="protein sequence ID" value="AT5G40850.1"/>
    <property type="gene ID" value="AT5G40850"/>
</dbReference>
<dbReference type="KEGG" id="ath:AT5G40850"/>
<dbReference type="Araport" id="AT5G40850"/>
<dbReference type="TAIR" id="AT5G40850">
    <property type="gene designation" value="UPM1"/>
</dbReference>
<dbReference type="eggNOG" id="KOG1527">
    <property type="taxonomic scope" value="Eukaryota"/>
</dbReference>
<dbReference type="HOGENOM" id="CLU_011276_7_4_1"/>
<dbReference type="InParanoid" id="Q42606"/>
<dbReference type="OMA" id="EWTPQEY"/>
<dbReference type="PhylomeDB" id="Q42606"/>
<dbReference type="BioCyc" id="ARA:AT5G40850-MONOMER"/>
<dbReference type="BRENDA" id="2.1.1.107">
    <property type="organism ID" value="399"/>
</dbReference>
<dbReference type="UniPathway" id="UPA00262">
    <property type="reaction ID" value="UER00211"/>
</dbReference>
<dbReference type="PRO" id="PR:Q42606"/>
<dbReference type="Proteomes" id="UP000006548">
    <property type="component" value="Chromosome 5"/>
</dbReference>
<dbReference type="ExpressionAtlas" id="Q42606">
    <property type="expression patterns" value="baseline and differential"/>
</dbReference>
<dbReference type="GO" id="GO:0009507">
    <property type="term" value="C:chloroplast"/>
    <property type="evidence" value="ECO:0000314"/>
    <property type="project" value="TAIR"/>
</dbReference>
<dbReference type="GO" id="GO:0004851">
    <property type="term" value="F:uroporphyrin-III C-methyltransferase activity"/>
    <property type="evidence" value="ECO:0000314"/>
    <property type="project" value="TAIR"/>
</dbReference>
<dbReference type="GO" id="GO:0032259">
    <property type="term" value="P:methylation"/>
    <property type="evidence" value="ECO:0007669"/>
    <property type="project" value="UniProtKB-KW"/>
</dbReference>
<dbReference type="GO" id="GO:1902326">
    <property type="term" value="P:positive regulation of chlorophyll biosynthetic process"/>
    <property type="evidence" value="ECO:0000315"/>
    <property type="project" value="UniProtKB"/>
</dbReference>
<dbReference type="GO" id="GO:0090352">
    <property type="term" value="P:regulation of nitrate assimilation"/>
    <property type="evidence" value="ECO:0000315"/>
    <property type="project" value="UniProtKB"/>
</dbReference>
<dbReference type="GO" id="GO:1900058">
    <property type="term" value="P:regulation of sulfate assimilation"/>
    <property type="evidence" value="ECO:0000315"/>
    <property type="project" value="UniProtKB"/>
</dbReference>
<dbReference type="GO" id="GO:0009416">
    <property type="term" value="P:response to light stimulus"/>
    <property type="evidence" value="ECO:0000270"/>
    <property type="project" value="UniProtKB"/>
</dbReference>
<dbReference type="GO" id="GO:0019354">
    <property type="term" value="P:siroheme biosynthetic process"/>
    <property type="evidence" value="ECO:0000314"/>
    <property type="project" value="TAIR"/>
</dbReference>
<dbReference type="CDD" id="cd11642">
    <property type="entry name" value="SUMT"/>
    <property type="match status" value="1"/>
</dbReference>
<dbReference type="FunFam" id="3.30.950.10:FF:000001">
    <property type="entry name" value="Siroheme synthase"/>
    <property type="match status" value="1"/>
</dbReference>
<dbReference type="FunFam" id="3.40.1010.10:FF:000001">
    <property type="entry name" value="Siroheme synthase"/>
    <property type="match status" value="1"/>
</dbReference>
<dbReference type="Gene3D" id="3.40.1010.10">
    <property type="entry name" value="Cobalt-precorrin-4 Transmethylase, Domain 1"/>
    <property type="match status" value="1"/>
</dbReference>
<dbReference type="Gene3D" id="3.30.950.10">
    <property type="entry name" value="Methyltransferase, Cobalt-precorrin-4 Transmethylase, Domain 2"/>
    <property type="match status" value="1"/>
</dbReference>
<dbReference type="InterPro" id="IPR000878">
    <property type="entry name" value="4pyrrol_Mease"/>
</dbReference>
<dbReference type="InterPro" id="IPR035996">
    <property type="entry name" value="4pyrrol_Methylase_sf"/>
</dbReference>
<dbReference type="InterPro" id="IPR014777">
    <property type="entry name" value="4pyrrole_Mease_sub1"/>
</dbReference>
<dbReference type="InterPro" id="IPR014776">
    <property type="entry name" value="4pyrrole_Mease_sub2"/>
</dbReference>
<dbReference type="InterPro" id="IPR006366">
    <property type="entry name" value="CobA/CysG_C"/>
</dbReference>
<dbReference type="InterPro" id="IPR050161">
    <property type="entry name" value="Siro_Cobalamin_biosynth"/>
</dbReference>
<dbReference type="InterPro" id="IPR003043">
    <property type="entry name" value="Uropor_MeTrfase_CS"/>
</dbReference>
<dbReference type="InterPro" id="IPR012383">
    <property type="entry name" value="Uropor_MeTrfase_pln"/>
</dbReference>
<dbReference type="NCBIfam" id="TIGR01469">
    <property type="entry name" value="cobA_cysG_Cterm"/>
    <property type="match status" value="1"/>
</dbReference>
<dbReference type="NCBIfam" id="NF004790">
    <property type="entry name" value="PRK06136.1"/>
    <property type="match status" value="1"/>
</dbReference>
<dbReference type="PANTHER" id="PTHR45790:SF3">
    <property type="entry name" value="S-ADENOSYL-L-METHIONINE-DEPENDENT UROPORPHYRINOGEN III METHYLTRANSFERASE, CHLOROPLASTIC"/>
    <property type="match status" value="1"/>
</dbReference>
<dbReference type="PANTHER" id="PTHR45790">
    <property type="entry name" value="SIROHEME SYNTHASE-RELATED"/>
    <property type="match status" value="1"/>
</dbReference>
<dbReference type="Pfam" id="PF00590">
    <property type="entry name" value="TP_methylase"/>
    <property type="match status" value="1"/>
</dbReference>
<dbReference type="PIRSF" id="PIRSF036478">
    <property type="entry name" value="Uropor_mtas_plnt"/>
    <property type="match status" value="1"/>
</dbReference>
<dbReference type="SUPFAM" id="SSF53790">
    <property type="entry name" value="Tetrapyrrole methylase"/>
    <property type="match status" value="1"/>
</dbReference>
<dbReference type="PROSITE" id="PS00839">
    <property type="entry name" value="SUMT_1"/>
    <property type="match status" value="1"/>
</dbReference>
<dbReference type="PROSITE" id="PS00840">
    <property type="entry name" value="SUMT_2"/>
    <property type="match status" value="1"/>
</dbReference>
<protein>
    <recommendedName>
        <fullName evidence="8 9">S-adenosyl-L-methionine-dependent uroporphyrinogen III methyltransferase, chloroplastic</fullName>
        <shortName evidence="8 9">Urophorphyrin III methylase</shortName>
        <ecNumber evidence="7">2.1.1.107</ecNumber>
    </recommendedName>
    <alternativeName>
        <fullName evidence="8 9">Urophorphyrin methylase 1</fullName>
        <shortName evidence="8 9">AtUPM1</shortName>
    </alternativeName>
</protein>